<gene>
    <name evidence="27" type="primary">CDT1</name>
</gene>
<comment type="function">
    <text evidence="1 5 6 8 18 19 23">Required for both DNA replication and mitosis (PubMed:11125146, PubMed:14993212, PubMed:21856198, PubMed:22581055, PubMed:26842564). DNA replication licensing factor, required for pre-replication complex assembly. Cooperates with CDC6 and the origin recognition complex (ORC) during G1 phase of the cell cycle to promote the loading of the mini-chromosome maintenance (MCM) complex onto DNA to generate pre-replication complexes (pre-RC) (PubMed:14672932). Required also for mitosis by promoting stable kinetochore-microtubule attachments (PubMed:22581055). Potential oncogene (By similarity).</text>
</comment>
<comment type="subunit">
    <text evidence="1 5 6 8 9 11 14 17 19 20 22 23">Interacts with GMNN; the interaction inhibits binding of the MCM complex to origins of replication (PubMed:11125146, PubMed:14672932, PubMed:14993212, PubMed:15257290). Interacts with MCM6 (By similarity). Interacts with CDC6; are mutually dependent on one another for loading MCM complexes onto chromatin (PubMed:14672932). Interacts with PCNA (PubMed:16861906). Interacts with LRWD1 during G1 phase and during mitosis (PubMed:22645314). Interacts with NDC80 subunit of the NDC80 complex; leading to kinetochore localization (PubMed:22581055). Interacts with GRWD1; origin binding of GRWD1 is dependent on CDT1 (PubMed:25990725). Interacts with KAT7 (PubMed:18832067). Interacts with ubiquitin-binding protein FAF1; the interaction is likely to promote CDT1 degradation (PubMed:26842564).</text>
</comment>
<comment type="interaction">
    <interactant intactId="EBI-456953">
        <id>Q9H211</id>
    </interactant>
    <interactant intactId="EBI-374862">
        <id>Q99741</id>
        <label>CDC6</label>
    </interactant>
    <organismsDiffer>false</organismsDiffer>
    <experiments>3</experiments>
</comment>
<comment type="interaction">
    <interactant intactId="EBI-456953">
        <id>Q9H211</id>
    </interactant>
    <interactant intactId="EBI-371669">
        <id>O75496</id>
        <label>GMNN</label>
    </interactant>
    <organismsDiffer>false</organismsDiffer>
    <experiments>22</experiments>
</comment>
<comment type="interaction">
    <interactant intactId="EBI-456953">
        <id>Q9H211</id>
    </interactant>
    <interactant intactId="EBI-374900">
        <id>Q14566</id>
        <label>MCM6</label>
    </interactant>
    <organismsDiffer>false</organismsDiffer>
    <experiments>4</experiments>
</comment>
<comment type="interaction">
    <interactant intactId="EBI-456953">
        <id>Q9H211</id>
    </interactant>
    <interactant intactId="EBI-715849">
        <id>O14777</id>
        <label>NDC80</label>
    </interactant>
    <organismsDiffer>false</organismsDiffer>
    <experiments>7</experiments>
</comment>
<comment type="interaction">
    <interactant intactId="EBI-456953">
        <id>Q9H211</id>
    </interactant>
    <interactant intactId="EBI-358311">
        <id>P12004</id>
        <label>PCNA</label>
    </interactant>
    <organismsDiffer>false</organismsDiffer>
    <experiments>2</experiments>
</comment>
<comment type="subcellular location">
    <subcellularLocation>
        <location evidence="5 23">Nucleus</location>
    </subcellularLocation>
    <subcellularLocation>
        <location evidence="19">Chromosome</location>
        <location evidence="19">Centromere</location>
        <location evidence="19">Kinetochore</location>
    </subcellularLocation>
    <text evidence="19">Transiently localizes to kinetochores during prometaphase and metaphase.</text>
</comment>
<comment type="developmental stage">
    <text evidence="5 24">Present during G1 and early S phase of the cell cycle. Degraded during the late S, G2, and M phases.</text>
</comment>
<comment type="induction">
    <text evidence="7">Induced by E2F transcription factors (PubMed:14990995).</text>
</comment>
<comment type="domain">
    <text evidence="2">The PIP-box K+4 motif mediates both the interaction with PCNA and the recruitment of the DCX(DTL) complex: while the PIP-box interacts with PCNA, the presence of the K+4 submotif, recruits the DCX(DTL) complex, leading to its ubiquitination.</text>
</comment>
<comment type="PTM">
    <text evidence="8 9 11 12 13 21 24">Two independent E3 ubiquitin ligase complexes, SCF(SKP2) and the DCX(DTL) complex, mediated CDT1 degradation in S phase (PubMed:14993212, PubMed:16861906, PubMed:16949367, PubMed:17085480). Ubiquitinated by the DCX(DTL) complex, in response to DNA damage, leading to its degradation (PubMed:16861906, PubMed:17085480). Ubiquitination by the DCX(DTL) complex is necessary to ensure proper cell cycle regulation and is PCNA-dependent: interacts with PCNA via its PIP-box, while the presence of the containing the 'K+4' motif in the PIP box, recruit the DCX(DTL) complex, leading to its degradation (PubMed:16861906, PubMed:17085480). Phosphorylation at Thr-29 by CDK2 targets CDT1 for ubiquitination by SCF(SKP2) E3 ubiquitin ligase and subsequent degradation (PubMed:14993212). The interaction with GMNN protects it against ubiquitination (PubMed:15257290). Deubiquitinated by USP37 (PubMed:27296872). Ubiquitinated and degraded by the SCF(FBXO31) complex during the G2 phase to prevent re-replication (PubMed:24828503).</text>
</comment>
<comment type="PTM">
    <text evidence="1 8 18 20">Phosphorylation by cyclin A-dependent kinases at Thr-29 targets CDT1 for ubiquitynation by SCF(SKP2) E3 ubiquitin ligase and subsequent degradation (PubMed:14993212). Phosphorylated at Thr-29 by MAPK8/JNK1, which blocks replication licensing in response to stress (PubMed:21856198). Binding to GMNN is not affected by phosphorylation.</text>
</comment>
<comment type="disease" evidence="15 16">
    <disease id="DI-03046">
        <name>Meier-Gorlin syndrome 4</name>
        <acronym>MGORS4</acronym>
        <description>A syndrome characterized by bilateral microtia, aplasia/hypoplasia of the patellae, and severe intrauterine and postnatal growth retardation with short stature and poor weight gain. Additional clinical findings include anomalies of cranial sutures, microcephaly, apparently low-set and simple ears, microstomia, full lips, highly arched or cleft palate, micrognathia, genitourinary tract anomalies, and various skeletal anomalies. While almost all cases have primordial dwarfism with substantial prenatal and postnatal growth retardation, not all cases have microcephaly, and microtia and absent/hypoplastic patella are absent in some. Despite the presence of microcephaly, intellect is usually normal.</description>
        <dbReference type="MIM" id="613804"/>
    </disease>
    <text>The disease is caused by variants affecting the gene represented in this entry.</text>
</comment>
<comment type="similarity">
    <text evidence="26">Belongs to the Cdt1 family.</text>
</comment>
<comment type="sequence caution" evidence="26">
    <conflict type="frameshift">
        <sequence resource="EMBL" id="AF070552"/>
    </conflict>
</comment>
<comment type="online information" name="Atlas of Genetics and Cytogenetics in Oncology and Haematology">
    <link uri="https://atlasgeneticsoncology.org/gene/44175/CDT1"/>
</comment>
<keyword id="KW-0002">3D-structure</keyword>
<keyword id="KW-0131">Cell cycle</keyword>
<keyword id="KW-0132">Cell division</keyword>
<keyword id="KW-0137">Centromere</keyword>
<keyword id="KW-0158">Chromosome</keyword>
<keyword id="KW-0225">Disease variant</keyword>
<keyword id="KW-0235">DNA replication</keyword>
<keyword id="KW-0242">Dwarfism</keyword>
<keyword id="KW-0995">Kinetochore</keyword>
<keyword id="KW-0498">Mitosis</keyword>
<keyword id="KW-0539">Nucleus</keyword>
<keyword id="KW-0597">Phosphoprotein</keyword>
<keyword id="KW-1267">Proteomics identification</keyword>
<keyword id="KW-0656">Proto-oncogene</keyword>
<keyword id="KW-1185">Reference proteome</keyword>
<keyword id="KW-0832">Ubl conjugation</keyword>
<dbReference type="EMBL" id="AF321125">
    <property type="protein sequence ID" value="AAG45181.1"/>
    <property type="molecule type" value="mRNA"/>
</dbReference>
<dbReference type="EMBL" id="AB053172">
    <property type="protein sequence ID" value="BAB61878.1"/>
    <property type="molecule type" value="mRNA"/>
</dbReference>
<dbReference type="EMBL" id="AC092384">
    <property type="status" value="NOT_ANNOTATED_CDS"/>
    <property type="molecule type" value="Genomic_DNA"/>
</dbReference>
<dbReference type="EMBL" id="BC000137">
    <property type="protein sequence ID" value="AAH00137.2"/>
    <property type="molecule type" value="mRNA"/>
</dbReference>
<dbReference type="EMBL" id="BC008676">
    <property type="protein sequence ID" value="AAH08676.1"/>
    <property type="molecule type" value="mRNA"/>
</dbReference>
<dbReference type="EMBL" id="BC008860">
    <property type="protein sequence ID" value="AAH08860.2"/>
    <property type="molecule type" value="mRNA"/>
</dbReference>
<dbReference type="EMBL" id="BC009410">
    <property type="protein sequence ID" value="AAH09410.1"/>
    <property type="molecule type" value="mRNA"/>
</dbReference>
<dbReference type="EMBL" id="BC014202">
    <property type="protein sequence ID" value="AAH14202.2"/>
    <property type="molecule type" value="mRNA"/>
</dbReference>
<dbReference type="EMBL" id="BC049205">
    <property type="protein sequence ID" value="AAH49205.1"/>
    <property type="molecule type" value="mRNA"/>
</dbReference>
<dbReference type="EMBL" id="AF070552">
    <property type="status" value="NOT_ANNOTATED_CDS"/>
    <property type="molecule type" value="mRNA"/>
</dbReference>
<dbReference type="CCDS" id="CCDS32510.1"/>
<dbReference type="RefSeq" id="NP_112190.2">
    <property type="nucleotide sequence ID" value="NM_030928.4"/>
</dbReference>
<dbReference type="PDB" id="2LE8">
    <property type="method" value="NMR"/>
    <property type="chains" value="B=413-440"/>
</dbReference>
<dbReference type="PDB" id="2WVR">
    <property type="method" value="X-ray"/>
    <property type="resolution" value="3.30 A"/>
    <property type="chains" value="C=1-546"/>
</dbReference>
<dbReference type="PDB" id="6QCG">
    <property type="method" value="X-ray"/>
    <property type="resolution" value="3.40 A"/>
    <property type="chains" value="G/H/I/J/K/L=1-14"/>
</dbReference>
<dbReference type="PDB" id="8RWV">
    <property type="method" value="EM"/>
    <property type="resolution" value="6.68 A"/>
    <property type="chains" value="G=158-546"/>
</dbReference>
<dbReference type="PDB" id="8S0E">
    <property type="method" value="EM"/>
    <property type="resolution" value="3.80 A"/>
    <property type="chains" value="8=1-546"/>
</dbReference>
<dbReference type="PDB" id="8S0F">
    <property type="method" value="EM"/>
    <property type="resolution" value="4.10 A"/>
    <property type="chains" value="8=1-546"/>
</dbReference>
<dbReference type="PDBsum" id="2LE8"/>
<dbReference type="PDBsum" id="2WVR"/>
<dbReference type="PDBsum" id="6QCG"/>
<dbReference type="PDBsum" id="8RWV"/>
<dbReference type="PDBsum" id="8S0E"/>
<dbReference type="PDBsum" id="8S0F"/>
<dbReference type="BMRB" id="Q9H211"/>
<dbReference type="EMDB" id="EMD-19566"/>
<dbReference type="EMDB" id="EMD-19623"/>
<dbReference type="EMDB" id="EMD-19624"/>
<dbReference type="SASBDB" id="Q9H211"/>
<dbReference type="SMR" id="Q9H211"/>
<dbReference type="BioGRID" id="123555">
    <property type="interactions" value="77"/>
</dbReference>
<dbReference type="ComplexPortal" id="CPX-659">
    <property type="entry name" value="CDT1-Geminin complex"/>
</dbReference>
<dbReference type="CORUM" id="Q9H211"/>
<dbReference type="DIP" id="DIP-31089N"/>
<dbReference type="FunCoup" id="Q9H211">
    <property type="interactions" value="1914"/>
</dbReference>
<dbReference type="IntAct" id="Q9H211">
    <property type="interactions" value="32"/>
</dbReference>
<dbReference type="MINT" id="Q9H211"/>
<dbReference type="STRING" id="9606.ENSP00000301019"/>
<dbReference type="MoonProt" id="Q9H211"/>
<dbReference type="GlyGen" id="Q9H211">
    <property type="glycosylation" value="1 site"/>
</dbReference>
<dbReference type="iPTMnet" id="Q9H211"/>
<dbReference type="PhosphoSitePlus" id="Q9H211"/>
<dbReference type="BioMuta" id="CDT1"/>
<dbReference type="DMDM" id="308153620"/>
<dbReference type="jPOST" id="Q9H211"/>
<dbReference type="MassIVE" id="Q9H211"/>
<dbReference type="PaxDb" id="9606-ENSP00000301019"/>
<dbReference type="PeptideAtlas" id="Q9H211"/>
<dbReference type="ProteomicsDB" id="80471"/>
<dbReference type="Pumba" id="Q9H211"/>
<dbReference type="Antibodypedia" id="1905">
    <property type="antibodies" value="223 antibodies from 35 providers"/>
</dbReference>
<dbReference type="DNASU" id="81620"/>
<dbReference type="Ensembl" id="ENST00000301019.9">
    <property type="protein sequence ID" value="ENSP00000301019.4"/>
    <property type="gene ID" value="ENSG00000167513.9"/>
</dbReference>
<dbReference type="GeneID" id="81620"/>
<dbReference type="KEGG" id="hsa:81620"/>
<dbReference type="MANE-Select" id="ENST00000301019.9">
    <property type="protein sequence ID" value="ENSP00000301019.4"/>
    <property type="RefSeq nucleotide sequence ID" value="NM_030928.4"/>
    <property type="RefSeq protein sequence ID" value="NP_112190.2"/>
</dbReference>
<dbReference type="UCSC" id="uc002flu.4">
    <property type="organism name" value="human"/>
</dbReference>
<dbReference type="AGR" id="HGNC:24576"/>
<dbReference type="CTD" id="81620"/>
<dbReference type="DisGeNET" id="81620"/>
<dbReference type="GeneCards" id="CDT1"/>
<dbReference type="HGNC" id="HGNC:24576">
    <property type="gene designation" value="CDT1"/>
</dbReference>
<dbReference type="HPA" id="ENSG00000167513">
    <property type="expression patterns" value="Tissue enriched (bone)"/>
</dbReference>
<dbReference type="MalaCards" id="CDT1"/>
<dbReference type="MIM" id="605525">
    <property type="type" value="gene"/>
</dbReference>
<dbReference type="MIM" id="613804">
    <property type="type" value="phenotype"/>
</dbReference>
<dbReference type="neXtProt" id="NX_Q9H211"/>
<dbReference type="OpenTargets" id="ENSG00000167513"/>
<dbReference type="Orphanet" id="2554">
    <property type="disease" value="Ear-patella-short stature syndrome"/>
</dbReference>
<dbReference type="PharmGKB" id="PA145008572"/>
<dbReference type="VEuPathDB" id="HostDB:ENSG00000167513"/>
<dbReference type="eggNOG" id="KOG4762">
    <property type="taxonomic scope" value="Eukaryota"/>
</dbReference>
<dbReference type="GeneTree" id="ENSGT00390000012337"/>
<dbReference type="HOGENOM" id="CLU_023373_1_0_1"/>
<dbReference type="InParanoid" id="Q9H211"/>
<dbReference type="OMA" id="CFRQERN"/>
<dbReference type="OrthoDB" id="341730at2759"/>
<dbReference type="PAN-GO" id="Q9H211">
    <property type="GO annotations" value="7 GO annotations based on evolutionary models"/>
</dbReference>
<dbReference type="PhylomeDB" id="Q9H211"/>
<dbReference type="TreeFam" id="TF101159"/>
<dbReference type="PathwayCommons" id="Q9H211"/>
<dbReference type="Reactome" id="R-HSA-68867">
    <property type="pathway name" value="Assembly of the pre-replicative complex"/>
</dbReference>
<dbReference type="Reactome" id="R-HSA-68949">
    <property type="pathway name" value="Orc1 removal from chromatin"/>
</dbReference>
<dbReference type="Reactome" id="R-HSA-68962">
    <property type="pathway name" value="Activation of the pre-replicative complex"/>
</dbReference>
<dbReference type="Reactome" id="R-HSA-69052">
    <property type="pathway name" value="Switching of origins to a post-replicative state"/>
</dbReference>
<dbReference type="Reactome" id="R-HSA-69205">
    <property type="pathway name" value="G1/S-Specific Transcription"/>
</dbReference>
<dbReference type="SignaLink" id="Q9H211"/>
<dbReference type="SIGNOR" id="Q9H211"/>
<dbReference type="BioGRID-ORCS" id="81620">
    <property type="hits" value="816 hits in 1177 CRISPR screens"/>
</dbReference>
<dbReference type="ChiTaRS" id="CDT1">
    <property type="organism name" value="human"/>
</dbReference>
<dbReference type="EvolutionaryTrace" id="Q9H211"/>
<dbReference type="GeneWiki" id="DNA_replication_factor_CDT1"/>
<dbReference type="GenomeRNAi" id="81620"/>
<dbReference type="Pharos" id="Q9H211">
    <property type="development level" value="Tbio"/>
</dbReference>
<dbReference type="PRO" id="PR:Q9H211"/>
<dbReference type="Proteomes" id="UP000005640">
    <property type="component" value="Chromosome 16"/>
</dbReference>
<dbReference type="RNAct" id="Q9H211">
    <property type="molecule type" value="protein"/>
</dbReference>
<dbReference type="Bgee" id="ENSG00000167513">
    <property type="expression patterns" value="Expressed in mucosa of paranasal sinus and 134 other cell types or tissues"/>
</dbReference>
<dbReference type="ExpressionAtlas" id="Q9H211">
    <property type="expression patterns" value="baseline and differential"/>
</dbReference>
<dbReference type="GO" id="GO:0000776">
    <property type="term" value="C:kinetochore"/>
    <property type="evidence" value="ECO:0000314"/>
    <property type="project" value="CAFA"/>
</dbReference>
<dbReference type="GO" id="GO:0016604">
    <property type="term" value="C:nuclear body"/>
    <property type="evidence" value="ECO:0000314"/>
    <property type="project" value="HPA"/>
</dbReference>
<dbReference type="GO" id="GO:0005654">
    <property type="term" value="C:nucleoplasm"/>
    <property type="evidence" value="ECO:0000314"/>
    <property type="project" value="HPA"/>
</dbReference>
<dbReference type="GO" id="GO:0005634">
    <property type="term" value="C:nucleus"/>
    <property type="evidence" value="ECO:0000314"/>
    <property type="project" value="UniProtKB"/>
</dbReference>
<dbReference type="GO" id="GO:0003682">
    <property type="term" value="F:chromatin binding"/>
    <property type="evidence" value="ECO:0000314"/>
    <property type="project" value="CAFA"/>
</dbReference>
<dbReference type="GO" id="GO:0003677">
    <property type="term" value="F:DNA binding"/>
    <property type="evidence" value="ECO:0000250"/>
    <property type="project" value="UniProtKB"/>
</dbReference>
<dbReference type="GO" id="GO:0070182">
    <property type="term" value="F:DNA polymerase binding"/>
    <property type="evidence" value="ECO:0000318"/>
    <property type="project" value="GO_Central"/>
</dbReference>
<dbReference type="GO" id="GO:0051315">
    <property type="term" value="P:attachment of mitotic spindle microtubules to kinetochore"/>
    <property type="evidence" value="ECO:0000315"/>
    <property type="project" value="UniProtKB"/>
</dbReference>
<dbReference type="GO" id="GO:0051301">
    <property type="term" value="P:cell division"/>
    <property type="evidence" value="ECO:0007669"/>
    <property type="project" value="UniProtKB-KW"/>
</dbReference>
<dbReference type="GO" id="GO:0000076">
    <property type="term" value="P:DNA replication checkpoint signaling"/>
    <property type="evidence" value="ECO:0000314"/>
    <property type="project" value="UniProtKB"/>
</dbReference>
<dbReference type="GO" id="GO:0071163">
    <property type="term" value="P:DNA replication preinitiation complex assembly"/>
    <property type="evidence" value="ECO:0000314"/>
    <property type="project" value="CAFA"/>
</dbReference>
<dbReference type="GO" id="GO:0000278">
    <property type="term" value="P:mitotic cell cycle"/>
    <property type="evidence" value="ECO:0000318"/>
    <property type="project" value="GO_Central"/>
</dbReference>
<dbReference type="GO" id="GO:0045786">
    <property type="term" value="P:negative regulation of cell cycle"/>
    <property type="evidence" value="ECO:0000314"/>
    <property type="project" value="ComplexPortal"/>
</dbReference>
<dbReference type="GO" id="GO:2000104">
    <property type="term" value="P:negative regulation of DNA-templated DNA replication"/>
    <property type="evidence" value="ECO:0000314"/>
    <property type="project" value="ComplexPortal"/>
</dbReference>
<dbReference type="GO" id="GO:0035563">
    <property type="term" value="P:positive regulation of chromatin binding"/>
    <property type="evidence" value="ECO:0000314"/>
    <property type="project" value="CAFA"/>
</dbReference>
<dbReference type="GO" id="GO:0045740">
    <property type="term" value="P:positive regulation of DNA replication"/>
    <property type="evidence" value="ECO:0000315"/>
    <property type="project" value="UniProtKB"/>
</dbReference>
<dbReference type="GO" id="GO:2000105">
    <property type="term" value="P:positive regulation of DNA-templated DNA replication"/>
    <property type="evidence" value="ECO:0000314"/>
    <property type="project" value="CAFA"/>
</dbReference>
<dbReference type="GO" id="GO:0030174">
    <property type="term" value="P:regulation of DNA-templated DNA replication initiation"/>
    <property type="evidence" value="ECO:0000314"/>
    <property type="project" value="UniProtKB"/>
</dbReference>
<dbReference type="GO" id="GO:0033262">
    <property type="term" value="P:regulation of nuclear cell cycle DNA replication"/>
    <property type="evidence" value="ECO:0007669"/>
    <property type="project" value="Ensembl"/>
</dbReference>
<dbReference type="GO" id="GO:0072708">
    <property type="term" value="P:response to sorbitol"/>
    <property type="evidence" value="ECO:0000314"/>
    <property type="project" value="CAFA"/>
</dbReference>
<dbReference type="CDD" id="cd08767">
    <property type="entry name" value="Cdt1_c"/>
    <property type="match status" value="1"/>
</dbReference>
<dbReference type="CDD" id="cd08674">
    <property type="entry name" value="Cdt1_m"/>
    <property type="match status" value="1"/>
</dbReference>
<dbReference type="FunFam" id="1.10.10.1420:FF:000001">
    <property type="entry name" value="Chromatin licensing and DNA replication factor 1"/>
    <property type="match status" value="1"/>
</dbReference>
<dbReference type="Gene3D" id="1.10.10.1420">
    <property type="entry name" value="DNA replication factor Cdt1, C-terminal WH domain"/>
    <property type="match status" value="1"/>
</dbReference>
<dbReference type="InterPro" id="IPR045173">
    <property type="entry name" value="Cdt1"/>
</dbReference>
<dbReference type="InterPro" id="IPR032054">
    <property type="entry name" value="Cdt1_C"/>
</dbReference>
<dbReference type="InterPro" id="IPR038090">
    <property type="entry name" value="Cdt1_C_WH_dom_sf"/>
</dbReference>
<dbReference type="InterPro" id="IPR014939">
    <property type="entry name" value="CDT1_Gemini-bd-like"/>
</dbReference>
<dbReference type="InterPro" id="IPR036390">
    <property type="entry name" value="WH_DNA-bd_sf"/>
</dbReference>
<dbReference type="PANTHER" id="PTHR28637">
    <property type="entry name" value="DNA REPLICATION FACTOR CDT1"/>
    <property type="match status" value="1"/>
</dbReference>
<dbReference type="PANTHER" id="PTHR28637:SF1">
    <property type="entry name" value="DNA REPLICATION FACTOR CDT1"/>
    <property type="match status" value="1"/>
</dbReference>
<dbReference type="Pfam" id="PF08839">
    <property type="entry name" value="CDT1"/>
    <property type="match status" value="1"/>
</dbReference>
<dbReference type="Pfam" id="PF16679">
    <property type="entry name" value="CDT1_C"/>
    <property type="match status" value="1"/>
</dbReference>
<dbReference type="SMART" id="SM01075">
    <property type="entry name" value="CDT1"/>
    <property type="match status" value="1"/>
</dbReference>
<dbReference type="SUPFAM" id="SSF46785">
    <property type="entry name" value="Winged helix' DNA-binding domain"/>
    <property type="match status" value="1"/>
</dbReference>
<protein>
    <recommendedName>
        <fullName>DNA replication factor Cdt1</fullName>
    </recommendedName>
    <alternativeName>
        <fullName>Double parked homolog</fullName>
        <shortName>DUP</shortName>
    </alternativeName>
</protein>
<reference evidence="26 27" key="1">
    <citation type="journal article" date="2000" name="Science">
        <title>Inhibition of eukaryotic DNA replication by geminin binding to Cdt1.</title>
        <authorList>
            <person name="Wohlschlegel J.A."/>
            <person name="Dwyer B.T."/>
            <person name="Dhar S.K."/>
            <person name="Cvetic C."/>
            <person name="Walter J.C."/>
            <person name="Dutta A."/>
        </authorList>
    </citation>
    <scope>NUCLEOTIDE SEQUENCE [MRNA]</scope>
    <scope>FUNCTION</scope>
    <scope>DEVELOPMENTAL STAGE</scope>
    <scope>SUBCELLULAR LOCATION</scope>
    <scope>INTERACTION WITH GMNN</scope>
    <scope>VARIANTS ARG-234 AND ALA-262</scope>
</reference>
<reference evidence="34" key="2">
    <citation type="journal article" date="2000" name="Nature">
        <title>The Cdt1 protein is required to license DNA for replication in fission yeast.</title>
        <authorList>
            <person name="Nishitani H."/>
            <person name="Lygerou Z."/>
            <person name="Nishimoto T."/>
            <person name="Nurse P."/>
        </authorList>
    </citation>
    <scope>NUCLEOTIDE SEQUENCE [MRNA]</scope>
    <scope>VARIANTS ARG-234 AND ALA-262</scope>
</reference>
<reference key="3">
    <citation type="journal article" date="2004" name="Nature">
        <title>The sequence and analysis of duplication-rich human chromosome 16.</title>
        <authorList>
            <person name="Martin J."/>
            <person name="Han C."/>
            <person name="Gordon L.A."/>
            <person name="Terry A."/>
            <person name="Prabhakar S."/>
            <person name="She X."/>
            <person name="Xie G."/>
            <person name="Hellsten U."/>
            <person name="Chan Y.M."/>
            <person name="Altherr M."/>
            <person name="Couronne O."/>
            <person name="Aerts A."/>
            <person name="Bajorek E."/>
            <person name="Black S."/>
            <person name="Blumer H."/>
            <person name="Branscomb E."/>
            <person name="Brown N.C."/>
            <person name="Bruno W.J."/>
            <person name="Buckingham J.M."/>
            <person name="Callen D.F."/>
            <person name="Campbell C.S."/>
            <person name="Campbell M.L."/>
            <person name="Campbell E.W."/>
            <person name="Caoile C."/>
            <person name="Challacombe J.F."/>
            <person name="Chasteen L.A."/>
            <person name="Chertkov O."/>
            <person name="Chi H.C."/>
            <person name="Christensen M."/>
            <person name="Clark L.M."/>
            <person name="Cohn J.D."/>
            <person name="Denys M."/>
            <person name="Detter J.C."/>
            <person name="Dickson M."/>
            <person name="Dimitrijevic-Bussod M."/>
            <person name="Escobar J."/>
            <person name="Fawcett J.J."/>
            <person name="Flowers D."/>
            <person name="Fotopulos D."/>
            <person name="Glavina T."/>
            <person name="Gomez M."/>
            <person name="Gonzales E."/>
            <person name="Goodstein D."/>
            <person name="Goodwin L.A."/>
            <person name="Grady D.L."/>
            <person name="Grigoriev I."/>
            <person name="Groza M."/>
            <person name="Hammon N."/>
            <person name="Hawkins T."/>
            <person name="Haydu L."/>
            <person name="Hildebrand C.E."/>
            <person name="Huang W."/>
            <person name="Israni S."/>
            <person name="Jett J."/>
            <person name="Jewett P.B."/>
            <person name="Kadner K."/>
            <person name="Kimball H."/>
            <person name="Kobayashi A."/>
            <person name="Krawczyk M.-C."/>
            <person name="Leyba T."/>
            <person name="Longmire J.L."/>
            <person name="Lopez F."/>
            <person name="Lou Y."/>
            <person name="Lowry S."/>
            <person name="Ludeman T."/>
            <person name="Manohar C.F."/>
            <person name="Mark G.A."/>
            <person name="McMurray K.L."/>
            <person name="Meincke L.J."/>
            <person name="Morgan J."/>
            <person name="Moyzis R.K."/>
            <person name="Mundt M.O."/>
            <person name="Munk A.C."/>
            <person name="Nandkeshwar R.D."/>
            <person name="Pitluck S."/>
            <person name="Pollard M."/>
            <person name="Predki P."/>
            <person name="Parson-Quintana B."/>
            <person name="Ramirez L."/>
            <person name="Rash S."/>
            <person name="Retterer J."/>
            <person name="Ricke D.O."/>
            <person name="Robinson D.L."/>
            <person name="Rodriguez A."/>
            <person name="Salamov A."/>
            <person name="Saunders E.H."/>
            <person name="Scott D."/>
            <person name="Shough T."/>
            <person name="Stallings R.L."/>
            <person name="Stalvey M."/>
            <person name="Sutherland R.D."/>
            <person name="Tapia R."/>
            <person name="Tesmer J.G."/>
            <person name="Thayer N."/>
            <person name="Thompson L.S."/>
            <person name="Tice H."/>
            <person name="Torney D.C."/>
            <person name="Tran-Gyamfi M."/>
            <person name="Tsai M."/>
            <person name="Ulanovsky L.E."/>
            <person name="Ustaszewska A."/>
            <person name="Vo N."/>
            <person name="White P.S."/>
            <person name="Williams A.L."/>
            <person name="Wills P.L."/>
            <person name="Wu J.-R."/>
            <person name="Wu K."/>
            <person name="Yang J."/>
            <person name="DeJong P."/>
            <person name="Bruce D."/>
            <person name="Doggett N.A."/>
            <person name="Deaven L."/>
            <person name="Schmutz J."/>
            <person name="Grimwood J."/>
            <person name="Richardson P."/>
            <person name="Rokhsar D.S."/>
            <person name="Eichler E.E."/>
            <person name="Gilna P."/>
            <person name="Lucas S.M."/>
            <person name="Myers R.M."/>
            <person name="Rubin E.M."/>
            <person name="Pennacchio L.A."/>
        </authorList>
    </citation>
    <scope>NUCLEOTIDE SEQUENCE [LARGE SCALE GENOMIC DNA]</scope>
</reference>
<reference evidence="32" key="4">
    <citation type="journal article" date="2004" name="Genome Res.">
        <title>The status, quality, and expansion of the NIH full-length cDNA project: the Mammalian Gene Collection (MGC).</title>
        <authorList>
            <consortium name="The MGC Project Team"/>
        </authorList>
    </citation>
    <scope>NUCLEOTIDE SEQUENCE [LARGE SCALE MRNA]</scope>
    <scope>VARIANTS ARG-234 AND ALA-262</scope>
    <source>
        <tissue evidence="30">Brain</tissue>
        <tissue evidence="28">Cervix</tissue>
        <tissue evidence="29">Eye</tissue>
        <tissue evidence="32">Kidney</tissue>
        <tissue evidence="33">Liver</tissue>
        <tissue evidence="31">Uterus</tissue>
    </source>
</reference>
<reference key="5">
    <citation type="submission" date="1998-06" db="EMBL/GenBank/DDBJ databases">
        <authorList>
            <person name="Yu W."/>
            <person name="Gibbs R.A."/>
        </authorList>
    </citation>
    <scope>NUCLEOTIDE SEQUENCE [LARGE SCALE MRNA] OF 136-546</scope>
    <scope>VARIANT ARG-234</scope>
    <source>
        <tissue>Brain</tissue>
    </source>
</reference>
<reference key="6">
    <citation type="journal article" date="2004" name="Oncogene">
        <title>Regulation of Geminin and Cdt1 expression by E2F transcription factors.</title>
        <authorList>
            <person name="Yoshida K."/>
            <person name="Inoue I."/>
        </authorList>
    </citation>
    <scope>INDUCTION</scope>
</reference>
<reference key="7">
    <citation type="journal article" date="2008" name="Genes Dev.">
        <title>HBO1 histone acetylase is a coactivator of the replication licensing factor Cdt1.</title>
        <authorList>
            <person name="Miotto B."/>
            <person name="Struhl K."/>
        </authorList>
    </citation>
    <scope>INTERACTION WITH KAT7</scope>
</reference>
<reference key="8">
    <citation type="journal article" date="2008" name="Proc. Natl. Acad. Sci. U.S.A.">
        <title>A quantitative atlas of mitotic phosphorylation.</title>
        <authorList>
            <person name="Dephoure N."/>
            <person name="Zhou C."/>
            <person name="Villen J."/>
            <person name="Beausoleil S.A."/>
            <person name="Bakalarski C.E."/>
            <person name="Elledge S.J."/>
            <person name="Gygi S.P."/>
        </authorList>
    </citation>
    <scope>PHOSPHORYLATION [LARGE SCALE ANALYSIS] AT SER-394</scope>
    <scope>IDENTIFICATION BY MASS SPECTROMETRY [LARGE SCALE ANALYSIS]</scope>
    <source>
        <tissue>Cervix carcinoma</tissue>
    </source>
</reference>
<reference key="9">
    <citation type="journal article" date="2009" name="Sci. Signal.">
        <title>Quantitative phosphoproteomic analysis of T cell receptor signaling reveals system-wide modulation of protein-protein interactions.</title>
        <authorList>
            <person name="Mayya V."/>
            <person name="Lundgren D.H."/>
            <person name="Hwang S.-I."/>
            <person name="Rezaul K."/>
            <person name="Wu L."/>
            <person name="Eng J.K."/>
            <person name="Rodionov V."/>
            <person name="Han D.K."/>
        </authorList>
    </citation>
    <scope>PHOSPHORYLATION [LARGE SCALE ANALYSIS] AT SER-318</scope>
    <scope>IDENTIFICATION BY MASS SPECTROMETRY [LARGE SCALE ANALYSIS]</scope>
    <source>
        <tissue>Leukemic T-cell</tissue>
    </source>
</reference>
<reference key="10">
    <citation type="journal article" date="2011" name="Mol. Cell">
        <title>JNK1 phosphorylation of Cdt1 inhibits recruitment of HBO1 histone acetylase and blocks replication licensing in response to stress.</title>
        <authorList>
            <person name="Miotto B."/>
            <person name="Struhl K."/>
        </authorList>
    </citation>
    <scope>PHOSPHORYLATION AT THR-29; SER-93 AND SER-318 BY MAPK8/JNK1</scope>
    <scope>FUNCTION</scope>
</reference>
<reference key="11">
    <citation type="journal article" date="2004" name="EMBO J.">
        <title>Human geminin promotes pre-RC formation and DNA replication by stabilizing CDT1 in mitosis.</title>
        <authorList>
            <person name="Ballabeni A."/>
            <person name="Melixetian M."/>
            <person name="Zamponi R."/>
            <person name="Masiero L."/>
            <person name="Marinoni F."/>
            <person name="Helin K."/>
        </authorList>
    </citation>
    <scope>UBIQUITINATION</scope>
    <scope>INTERACTION WITH GMNN</scope>
</reference>
<reference key="12">
    <citation type="journal article" date="2004" name="J. Biol. Chem.">
        <title>The regulated association of Cdt1 with minichromosome maintenance proteins and Cdc6 in mammalian cells.</title>
        <authorList>
            <person name="Cook J.G."/>
            <person name="Chasse D.A.D."/>
            <person name="Nevins J.R."/>
        </authorList>
    </citation>
    <scope>FUNCTION</scope>
    <scope>INTERACTION WITH MCM2; GMNN AND CDC6</scope>
</reference>
<reference key="13">
    <citation type="journal article" date="2004" name="J. Biol. Chem.">
        <title>Cdt1 phosphorylation by cyclin A-dependent kinases negatively regulates its function without affecting geminin binding.</title>
        <authorList>
            <person name="Sugimoto N."/>
            <person name="Tatsumi Y."/>
            <person name="Tsurumi T."/>
            <person name="Matsukage A."/>
            <person name="Kiyono T."/>
            <person name="Nishitani H."/>
            <person name="Fujita M."/>
        </authorList>
    </citation>
    <scope>FUNCTION</scope>
    <scope>PHOSPHORYLATION</scope>
    <scope>MUTAGENESIS OF 68-ARG--LEU-70</scope>
    <scope>INTERACTION WITH SKP2; GMNN AND CYCLIN A-DEPENDENT KINASES</scope>
</reference>
<reference key="14">
    <citation type="journal article" date="2006" name="Cell Cycle">
        <title>L2DTL/CDT2 interacts with the CUL4/DDB1 complex and PCNA and regulates CDT1 proteolysis in response to DNA damage.</title>
        <authorList>
            <person name="Higa L.A."/>
            <person name="Banks D."/>
            <person name="Wu M."/>
            <person name="Kobayashi R."/>
            <person name="Sun H."/>
            <person name="Zhang H."/>
        </authorList>
    </citation>
    <scope>UBIQUITINATION</scope>
    <scope>INTERACTION WITH PCNA</scope>
</reference>
<reference key="15">
    <citation type="journal article" date="2006" name="Genes Dev.">
        <title>DTL/CDT2 is essential for both CDT1 regulation and the early G2/M checkpoint.</title>
        <authorList>
            <person name="Sansam C.L."/>
            <person name="Shepard J.L."/>
            <person name="Lai K."/>
            <person name="Ianari A."/>
            <person name="Danielian P.S."/>
            <person name="Amsterdam A."/>
            <person name="Hopkins N."/>
            <person name="Lees J.A."/>
        </authorList>
    </citation>
    <scope>UBIQUITINATION</scope>
</reference>
<reference key="16">
    <citation type="journal article" date="2006" name="Mol. Cell">
        <title>A family of diverse Cul4-Ddb1-interacting proteins includes Cdt2, which is required for S phase destruction of the replication factor Cdt1.</title>
        <authorList>
            <person name="Jin J."/>
            <person name="Arias E.E."/>
            <person name="Chen J."/>
            <person name="Harper J.W."/>
            <person name="Walter J.C."/>
        </authorList>
    </citation>
    <scope>UBIQUITINATION</scope>
</reference>
<reference key="17">
    <citation type="journal article" date="2011" name="J. Biol. Chem.">
        <title>Idas, a novel phylogenetically conserved geminin-related protein, binds to geminin and is required for cell cycle progression.</title>
        <authorList>
            <person name="Pefani D.E."/>
            <person name="Dimaki M."/>
            <person name="Spella M."/>
            <person name="Karantzelis N."/>
            <person name="Mitsiki E."/>
            <person name="Kyrousi C."/>
            <person name="Symeonidou I.E."/>
            <person name="Perrakis A."/>
            <person name="Taraviras S."/>
            <person name="Lygerou Z."/>
        </authorList>
    </citation>
    <scope>INTERACTION WITH GMNN</scope>
    <scope>MUTAGENESIS OF TYR-170</scope>
</reference>
<reference key="18">
    <citation type="journal article" date="2012" name="Mol. Cell. Biol.">
        <title>Dynamic association of ORCA with prereplicative complex components regulates DNA replication initiation.</title>
        <authorList>
            <person name="Shen Z."/>
            <person name="Chakraborty A."/>
            <person name="Jain A."/>
            <person name="Giri S."/>
            <person name="Ha T."/>
            <person name="Prasanth K.V."/>
            <person name="Prasanth S.G."/>
        </authorList>
    </citation>
    <scope>INTERACTION WITH LRWD1</scope>
    <scope>PHOSPHORYLATION DURING MITOSIS</scope>
</reference>
<reference key="19">
    <citation type="journal article" date="2012" name="Nat. Cell Biol.">
        <title>Recruitment of the human Cdt1 replication licensing protein by the loop domain of Hec1 is required for stable kinetochore-microtubule attachment.</title>
        <authorList>
            <person name="Varma D."/>
            <person name="Chandrasekaran S."/>
            <person name="Sundin L.J."/>
            <person name="Reidy K.T."/>
            <person name="Wan X."/>
            <person name="Chasse D.A."/>
            <person name="Nevis K.R."/>
            <person name="DeLuca J.G."/>
            <person name="Salmon E.D."/>
            <person name="Cook J.G."/>
        </authorList>
    </citation>
    <scope>FUNCTION IN MITOSIS</scope>
    <scope>SUBCELLULAR LOCATION</scope>
    <scope>INTERACTION WITH NDC80</scope>
</reference>
<reference key="20">
    <citation type="journal article" date="2013" name="J. Proteome Res.">
        <title>Toward a comprehensive characterization of a human cancer cell phosphoproteome.</title>
        <authorList>
            <person name="Zhou H."/>
            <person name="Di Palma S."/>
            <person name="Preisinger C."/>
            <person name="Peng M."/>
            <person name="Polat A.N."/>
            <person name="Heck A.J."/>
            <person name="Mohammed S."/>
        </authorList>
    </citation>
    <scope>PHOSPHORYLATION [LARGE SCALE ANALYSIS] AT SER-31 AND SER-380</scope>
    <scope>IDENTIFICATION BY MASS SPECTROMETRY [LARGE SCALE ANALYSIS]</scope>
    <source>
        <tissue>Cervix carcinoma</tissue>
        <tissue>Erythroleukemia</tissue>
    </source>
</reference>
<reference key="21">
    <citation type="journal article" date="2014" name="J. Biol. Chem.">
        <title>SCF-FBXO31 E3 ligase targets DNA replication factor Cdt1 for proteolysis in the G2 phase of cell cycle to prevent re-replication.</title>
        <authorList>
            <person name="Johansson P."/>
            <person name="Jeffery J."/>
            <person name="Al-Ejeh F."/>
            <person name="Schulz R.B."/>
            <person name="Callen D.F."/>
            <person name="Kumar R."/>
            <person name="Khanna K.K."/>
        </authorList>
    </citation>
    <scope>UBIQUITINATION</scope>
</reference>
<reference key="22">
    <citation type="journal article" date="2015" name="Nucleic Acids Res.">
        <title>Cdt1-binding protein GRWD1 is a novel histone-binding protein that facilitates MCM loading through its influence on chromatin architecture.</title>
        <authorList>
            <person name="Sugimoto N."/>
            <person name="Maehara K."/>
            <person name="Yoshida K."/>
            <person name="Yasukouchi S."/>
            <person name="Osano S."/>
            <person name="Watanabe S."/>
            <person name="Aizawa M."/>
            <person name="Yugawa T."/>
            <person name="Kiyono T."/>
            <person name="Kurumizaka H."/>
            <person name="Ohkawa Y."/>
            <person name="Fujita M."/>
        </authorList>
    </citation>
    <scope>INTERACTION WITH GRWD1</scope>
</reference>
<reference key="23">
    <citation type="journal article" date="2016" name="Mol. Oncol.">
        <title>USP37 deubiquitinates Cdt1 and contributes to regulate DNA replication.</title>
        <authorList>
            <person name="Hernandez-Perez S."/>
            <person name="Cabrera E."/>
            <person name="Amoedo H."/>
            <person name="Rodriguez-Acebes S."/>
            <person name="Koundrioukoff S."/>
            <person name="Debatisse M."/>
            <person name="Mendez J."/>
            <person name="Freire R."/>
        </authorList>
    </citation>
    <scope>DEUBIQUITINATION BY USP37</scope>
    <scope>DEVELOPMENTAL STAGE</scope>
</reference>
<reference key="24">
    <citation type="journal article" date="2016" name="Nat. Commun.">
        <title>Chromatin-associated degradation is defined by UBXN-3/FAF1 to safeguard DNA replication fork progression.</title>
        <authorList>
            <person name="Franz A."/>
            <person name="Pirson P.A."/>
            <person name="Pilger D."/>
            <person name="Halder S."/>
            <person name="Achuthankutty D."/>
            <person name="Kashkar H."/>
            <person name="Ramadan K."/>
            <person name="Hoppe T."/>
        </authorList>
    </citation>
    <scope>FUNCTION</scope>
    <scope>INTERACTION WITH FAF1</scope>
    <scope>SUBCELLULAR LOCATION</scope>
</reference>
<reference key="25">
    <citation type="journal article" date="2011" name="Nat. Genet.">
        <title>Mutations in the pre-replication complex cause Meier-Gorlin syndrome.</title>
        <authorList>
            <person name="Bicknell L.S."/>
            <person name="Bongers E.M."/>
            <person name="Leitch A."/>
            <person name="Brown S."/>
            <person name="Schoots J."/>
            <person name="Harley M.E."/>
            <person name="Aftimos S."/>
            <person name="Al-Aama J.Y."/>
            <person name="Bober M."/>
            <person name="Brown P.A."/>
            <person name="van Bokhoven H."/>
            <person name="Dean J."/>
            <person name="Edrees A.Y."/>
            <person name="Feingold M."/>
            <person name="Fryer A."/>
            <person name="Hoefsloot L.H."/>
            <person name="Kau N."/>
            <person name="Knoers N.V."/>
            <person name="Mackenzie J."/>
            <person name="Opitz J.M."/>
            <person name="Sarda P."/>
            <person name="Ross A."/>
            <person name="Temple I.K."/>
            <person name="Toutain A."/>
            <person name="Wise C.A."/>
            <person name="Wright M."/>
            <person name="Jackson A.P."/>
        </authorList>
    </citation>
    <scope>VARIANTS MGORS4 THR-66; HIS-117; TRP-453 AND GLN-462</scope>
</reference>
<reference key="26">
    <citation type="journal article" date="2011" name="Nat. Genet.">
        <title>Mutations in origin recognition complex gene ORC4 cause Meier-Gorlin syndrome.</title>
        <authorList>
            <person name="Guernsey D.L."/>
            <person name="Matsuoka M."/>
            <person name="Jiang H."/>
            <person name="Evans S."/>
            <person name="Macgillivray C."/>
            <person name="Nightingale M."/>
            <person name="Perry S."/>
            <person name="Ferguson M."/>
            <person name="LeBlanc M."/>
            <person name="Paquette J."/>
            <person name="Patry L."/>
            <person name="Rideout A.L."/>
            <person name="Thomas A."/>
            <person name="Orr A."/>
            <person name="McMaster C.R."/>
            <person name="Michaud J.L."/>
            <person name="Deal C."/>
            <person name="Langlois S."/>
            <person name="Superneau D.W."/>
            <person name="Parkash S."/>
            <person name="Ludman M."/>
            <person name="Skidmore D.L."/>
            <person name="Samuels M.E."/>
        </authorList>
    </citation>
    <scope>VARIANT MGORS4 LYS-468</scope>
</reference>
<name>CDT1_HUMAN</name>
<feature type="chain" id="PRO_0000191619" description="DNA replication factor Cdt1">
    <location>
        <begin position="1"/>
        <end position="546"/>
    </location>
</feature>
<feature type="region of interest" description="Disordered" evidence="3">
    <location>
        <begin position="1"/>
        <end position="118"/>
    </location>
</feature>
<feature type="region of interest" description="Disordered" evidence="3">
    <location>
        <begin position="143"/>
        <end position="165"/>
    </location>
</feature>
<feature type="region of interest" description="Interaction with GMNN">
    <location>
        <begin position="150"/>
        <end position="190"/>
    </location>
</feature>
<feature type="region of interest" description="Disordered" evidence="3">
    <location>
        <begin position="383"/>
        <end position="415"/>
    </location>
</feature>
<feature type="region of interest" description="Interaction with LRWD1" evidence="20">
    <location>
        <begin position="451"/>
        <end position="546"/>
    </location>
</feature>
<feature type="short sequence motif" description="PIP-box K+4 motif">
    <location>
        <begin position="1"/>
        <end position="23"/>
    </location>
</feature>
<feature type="short sequence motif" description="Cyclin-binding motif">
    <location>
        <begin position="68"/>
        <end position="70"/>
    </location>
</feature>
<feature type="compositionally biased region" description="Basic and acidic residues" evidence="3">
    <location>
        <begin position="1"/>
        <end position="11"/>
    </location>
</feature>
<feature type="compositionally biased region" description="Low complexity" evidence="3">
    <location>
        <begin position="28"/>
        <end position="45"/>
    </location>
</feature>
<feature type="compositionally biased region" description="Basic and acidic residues" evidence="3">
    <location>
        <begin position="155"/>
        <end position="164"/>
    </location>
</feature>
<feature type="compositionally biased region" description="Pro residues" evidence="3">
    <location>
        <begin position="392"/>
        <end position="410"/>
    </location>
</feature>
<feature type="modified residue" description="Phosphothreonine; by MAPK8" evidence="18">
    <location>
        <position position="29"/>
    </location>
</feature>
<feature type="modified residue" description="Phosphoserine" evidence="37">
    <location>
        <position position="31"/>
    </location>
</feature>
<feature type="modified residue" description="Phosphoserine; by MAPK8" evidence="18">
    <location>
        <position position="93"/>
    </location>
</feature>
<feature type="modified residue" description="Phosphoserine; by MAPK8" evidence="18 36">
    <location>
        <position position="318"/>
    </location>
</feature>
<feature type="modified residue" description="Phosphoserine" evidence="37">
    <location>
        <position position="380"/>
    </location>
</feature>
<feature type="modified residue" description="Phosphoserine" evidence="35">
    <location>
        <position position="394"/>
    </location>
</feature>
<feature type="sequence variant" id="VAR_065488" description="In MGORS4; dbSNP:rs387906918." evidence="16">
    <original>A</original>
    <variation>T</variation>
    <location>
        <position position="66"/>
    </location>
</feature>
<feature type="sequence variant" id="VAR_065489" description="In MGORS4; dbSNP:rs779871947." evidence="16">
    <original>Q</original>
    <variation>H</variation>
    <location>
        <position position="117"/>
    </location>
</feature>
<feature type="sequence variant" id="VAR_029163" description="In dbSNP:rs3218725.">
    <original>A</original>
    <variation>V</variation>
    <location>
        <position position="135"/>
    </location>
</feature>
<feature type="sequence variant" id="VAR_029164" description="In dbSNP:rs3218727.">
    <original>R</original>
    <variation>C</variation>
    <location>
        <position position="172"/>
    </location>
</feature>
<feature type="sequence variant" id="VAR_054504" description="In dbSNP:rs507329." evidence="4 5 10 25">
    <original>C</original>
    <variation>R</variation>
    <location>
        <position position="234"/>
    </location>
</feature>
<feature type="sequence variant" id="VAR_054505" description="In dbSNP:rs480727." evidence="4 5 10">
    <original>T</original>
    <variation>A</variation>
    <location>
        <position position="262"/>
    </location>
</feature>
<feature type="sequence variant" id="VAR_065490" description="In MGORS4; dbSNP:rs200672589." evidence="16">
    <original>R</original>
    <variation>W</variation>
    <location>
        <position position="453"/>
    </location>
</feature>
<feature type="sequence variant" id="VAR_029165" description="In dbSNP:rs3218729.">
    <original>E</original>
    <variation>A</variation>
    <location>
        <position position="456"/>
    </location>
</feature>
<feature type="sequence variant" id="VAR_065491" description="In MGORS4; dbSNP:rs387906917." evidence="16">
    <original>R</original>
    <variation>Q</variation>
    <location>
        <position position="462"/>
    </location>
</feature>
<feature type="sequence variant" id="VAR_065492" description="In MGORS4; dbSNP:rs200652608." evidence="15">
    <original>E</original>
    <variation>K</variation>
    <location>
        <position position="468"/>
    </location>
</feature>
<feature type="sequence variant" id="VAR_024408" description="In dbSNP:rs3218721.">
    <original>A</original>
    <variation>V</variation>
    <location>
        <position position="537"/>
    </location>
</feature>
<feature type="mutagenesis site" description="Abolishes binding of cyclin A-dependent protein kinases." evidence="8">
    <original>RRL</original>
    <variation>AAA</variation>
    <location>
        <begin position="68"/>
        <end position="70"/>
    </location>
</feature>
<feature type="mutagenesis site" description="Alters interaction with GMNN." evidence="17">
    <original>Y</original>
    <variation>A</variation>
    <location>
        <position position="170"/>
    </location>
</feature>
<feature type="sequence conflict" description="In Ref. 4; AAH49205." evidence="26" ref="4">
    <original>E</original>
    <variation>K</variation>
    <location>
        <position position="494"/>
    </location>
</feature>
<feature type="turn" evidence="40">
    <location>
        <begin position="6"/>
        <end position="9"/>
    </location>
</feature>
<feature type="helix" evidence="39">
    <location>
        <begin position="169"/>
        <end position="172"/>
    </location>
</feature>
<feature type="helix" evidence="39">
    <location>
        <begin position="174"/>
        <end position="177"/>
    </location>
</feature>
<feature type="strand" evidence="39">
    <location>
        <begin position="180"/>
        <end position="182"/>
    </location>
</feature>
<feature type="helix" evidence="39">
    <location>
        <begin position="188"/>
        <end position="209"/>
    </location>
</feature>
<feature type="helix" evidence="39">
    <location>
        <begin position="216"/>
        <end position="227"/>
    </location>
</feature>
<feature type="helix" evidence="39">
    <location>
        <begin position="233"/>
        <end position="242"/>
    </location>
</feature>
<feature type="helix" evidence="39">
    <location>
        <begin position="244"/>
        <end position="246"/>
    </location>
</feature>
<feature type="strand" evidence="39">
    <location>
        <begin position="247"/>
        <end position="251"/>
    </location>
</feature>
<feature type="strand" evidence="39">
    <location>
        <begin position="269"/>
        <end position="273"/>
    </location>
</feature>
<feature type="helix" evidence="39">
    <location>
        <begin position="288"/>
        <end position="314"/>
    </location>
</feature>
<feature type="turn" evidence="39">
    <location>
        <begin position="315"/>
        <end position="319"/>
    </location>
</feature>
<feature type="helix" evidence="39">
    <location>
        <begin position="325"/>
        <end position="327"/>
    </location>
</feature>
<feature type="helix" evidence="38">
    <location>
        <begin position="420"/>
        <end position="423"/>
    </location>
</feature>
<feature type="helix" evidence="38">
    <location>
        <begin position="425"/>
        <end position="435"/>
    </location>
</feature>
<sequence length="546" mass="60390">MEQRRVTDFFARRRPGPPRIAPPKLACRTPSPARPALRAPASATSGSRKRARPPAAPGRDQARPPARRRLRLSVDEVSSPSTPEAPDIPACPSPGQKIKKSTPAAGQPPHLTSAQDQDTISELASCLQRARELGARVRALKASAQDAGESCTPEAEGRPEEPCGEKAPAYQRFHALAQPGLPGLVLPYKYQVLAEMFRSMDTIVGMLHNRSETPTFAKVQRGVQDMMRRRFEECNVGQIKTVYPASYRFRQERSVPTFKDGTRRSDYQLTIEPLLEQEADGAAPQLTASRLLQRRQIFSQKLVEHVKEHHKAFLASLSPAMVVPEDQLTRWHPRFNVDEVPDIEPAALPQPPATEKLTTAQEVLARARNLISPRMEKALSQLALRSAAPSSPGSPRPALPATPPATPPAASPSALKGVSQDLLERIRAKEAQKQLAQMTRCPEQEQRLQRLERLPELARVLRSVFVSERKPALSMEVACARMVGSCCTIMSPGEMEKHLLLLSELLPDWLSLHRIRTDTYVKLDKAADLAHITARLAHQTRAEEGL</sequence>
<evidence type="ECO:0000250" key="1">
    <source>
        <dbReference type="UniProtKB" id="Q8R4E9"/>
    </source>
</evidence>
<evidence type="ECO:0000250" key="2">
    <source>
        <dbReference type="UniProtKB" id="Q9I9A7"/>
    </source>
</evidence>
<evidence type="ECO:0000256" key="3">
    <source>
        <dbReference type="SAM" id="MobiDB-lite"/>
    </source>
</evidence>
<evidence type="ECO:0000269" key="4">
    <source>
    </source>
</evidence>
<evidence type="ECO:0000269" key="5">
    <source>
    </source>
</evidence>
<evidence type="ECO:0000269" key="6">
    <source>
    </source>
</evidence>
<evidence type="ECO:0000269" key="7">
    <source>
    </source>
</evidence>
<evidence type="ECO:0000269" key="8">
    <source>
    </source>
</evidence>
<evidence type="ECO:0000269" key="9">
    <source>
    </source>
</evidence>
<evidence type="ECO:0000269" key="10">
    <source>
    </source>
</evidence>
<evidence type="ECO:0000269" key="11">
    <source>
    </source>
</evidence>
<evidence type="ECO:0000269" key="12">
    <source>
    </source>
</evidence>
<evidence type="ECO:0000269" key="13">
    <source>
    </source>
</evidence>
<evidence type="ECO:0000269" key="14">
    <source>
    </source>
</evidence>
<evidence type="ECO:0000269" key="15">
    <source>
    </source>
</evidence>
<evidence type="ECO:0000269" key="16">
    <source>
    </source>
</evidence>
<evidence type="ECO:0000269" key="17">
    <source>
    </source>
</evidence>
<evidence type="ECO:0000269" key="18">
    <source>
    </source>
</evidence>
<evidence type="ECO:0000269" key="19">
    <source>
    </source>
</evidence>
<evidence type="ECO:0000269" key="20">
    <source>
    </source>
</evidence>
<evidence type="ECO:0000269" key="21">
    <source>
    </source>
</evidence>
<evidence type="ECO:0000269" key="22">
    <source>
    </source>
</evidence>
<evidence type="ECO:0000269" key="23">
    <source>
    </source>
</evidence>
<evidence type="ECO:0000269" key="24">
    <source>
    </source>
</evidence>
<evidence type="ECO:0000269" key="25">
    <source ref="5"/>
</evidence>
<evidence type="ECO:0000305" key="26"/>
<evidence type="ECO:0000312" key="27">
    <source>
        <dbReference type="EMBL" id="AAG45181.1"/>
    </source>
</evidence>
<evidence type="ECO:0000312" key="28">
    <source>
        <dbReference type="EMBL" id="AAH00137.2"/>
    </source>
</evidence>
<evidence type="ECO:0000312" key="29">
    <source>
        <dbReference type="EMBL" id="AAH08676.1"/>
    </source>
</evidence>
<evidence type="ECO:0000312" key="30">
    <source>
        <dbReference type="EMBL" id="AAH08860.2"/>
    </source>
</evidence>
<evidence type="ECO:0000312" key="31">
    <source>
        <dbReference type="EMBL" id="AAH09410.1"/>
    </source>
</evidence>
<evidence type="ECO:0000312" key="32">
    <source>
        <dbReference type="EMBL" id="AAH14202.2"/>
    </source>
</evidence>
<evidence type="ECO:0000312" key="33">
    <source>
        <dbReference type="EMBL" id="AAH49205.1"/>
    </source>
</evidence>
<evidence type="ECO:0000312" key="34">
    <source>
        <dbReference type="EMBL" id="BAB61878.1"/>
    </source>
</evidence>
<evidence type="ECO:0007744" key="35">
    <source>
    </source>
</evidence>
<evidence type="ECO:0007744" key="36">
    <source>
    </source>
</evidence>
<evidence type="ECO:0007744" key="37">
    <source>
    </source>
</evidence>
<evidence type="ECO:0007829" key="38">
    <source>
        <dbReference type="PDB" id="2LE8"/>
    </source>
</evidence>
<evidence type="ECO:0007829" key="39">
    <source>
        <dbReference type="PDB" id="2WVR"/>
    </source>
</evidence>
<evidence type="ECO:0007829" key="40">
    <source>
        <dbReference type="PDB" id="6QCG"/>
    </source>
</evidence>
<organism>
    <name type="scientific">Homo sapiens</name>
    <name type="common">Human</name>
    <dbReference type="NCBI Taxonomy" id="9606"/>
    <lineage>
        <taxon>Eukaryota</taxon>
        <taxon>Metazoa</taxon>
        <taxon>Chordata</taxon>
        <taxon>Craniata</taxon>
        <taxon>Vertebrata</taxon>
        <taxon>Euteleostomi</taxon>
        <taxon>Mammalia</taxon>
        <taxon>Eutheria</taxon>
        <taxon>Euarchontoglires</taxon>
        <taxon>Primates</taxon>
        <taxon>Haplorrhini</taxon>
        <taxon>Catarrhini</taxon>
        <taxon>Hominidae</taxon>
        <taxon>Homo</taxon>
    </lineage>
</organism>
<accession>Q9H211</accession>
<accession>Q86XX9</accession>
<accession>Q96CJ5</accession>
<accession>Q96GK5</accession>
<accession>Q96H67</accession>
<accession>Q96HE6</accession>
<accession>Q9BWM0</accession>
<proteinExistence type="evidence at protein level"/>